<dbReference type="EMBL" id="AY653733">
    <property type="protein sequence ID" value="AAV50528.1"/>
    <property type="molecule type" value="Genomic_DNA"/>
</dbReference>
<dbReference type="SMR" id="Q5UPT8"/>
<dbReference type="KEGG" id="vg:9924865"/>
<dbReference type="OrthoDB" id="33604at10239"/>
<dbReference type="Proteomes" id="UP000001134">
    <property type="component" value="Genome"/>
</dbReference>
<proteinExistence type="predicted"/>
<sequence>MIISKPMETSRMSANIVKILNKHFAKYIRNECFDIIQIKNICNLYNNSTGKNSSITLSEINFSSPEFTKYNHTVNKNHLDILKTQEFVRKHSFFIKVMYACLKLNLEIFFLEEEFITLKNNYQIIKTLEATKKQLIHEHINILKSQYKDVSKKISDNYDDYLNDYLIKIKIIDKIHALINGLIKSNILESQDNLLSLILPYFFTYPEFIEEYN</sequence>
<organism>
    <name type="scientific">Acanthamoeba polyphaga mimivirus</name>
    <name type="common">APMV</name>
    <dbReference type="NCBI Taxonomy" id="212035"/>
    <lineage>
        <taxon>Viruses</taxon>
        <taxon>Varidnaviria</taxon>
        <taxon>Bamfordvirae</taxon>
        <taxon>Nucleocytoviricota</taxon>
        <taxon>Megaviricetes</taxon>
        <taxon>Imitervirales</taxon>
        <taxon>Mimiviridae</taxon>
        <taxon>Megamimivirinae</taxon>
        <taxon>Mimivirus</taxon>
        <taxon>Mimivirus bradfordmassiliense</taxon>
    </lineage>
</organism>
<name>YL256_MIMIV</name>
<gene>
    <name type="ordered locus">MIMI_L256</name>
</gene>
<feature type="chain" id="PRO_0000071253" description="Uncharacterized protein L256">
    <location>
        <begin position="1"/>
        <end position="213"/>
    </location>
</feature>
<protein>
    <recommendedName>
        <fullName>Uncharacterized protein L256</fullName>
    </recommendedName>
</protein>
<accession>Q5UPT8</accession>
<keyword id="KW-1185">Reference proteome</keyword>
<reference key="1">
    <citation type="journal article" date="2004" name="Science">
        <title>The 1.2-megabase genome sequence of Mimivirus.</title>
        <authorList>
            <person name="Raoult D."/>
            <person name="Audic S."/>
            <person name="Robert C."/>
            <person name="Abergel C."/>
            <person name="Renesto P."/>
            <person name="Ogata H."/>
            <person name="La Scola B."/>
            <person name="Susan M."/>
            <person name="Claverie J.-M."/>
        </authorList>
    </citation>
    <scope>NUCLEOTIDE SEQUENCE [LARGE SCALE GENOMIC DNA]</scope>
    <source>
        <strain>Rowbotham-Bradford</strain>
    </source>
</reference>
<organismHost>
    <name type="scientific">Acanthamoeba polyphaga</name>
    <name type="common">Amoeba</name>
    <dbReference type="NCBI Taxonomy" id="5757"/>
</organismHost>